<sequence>MVTQNKKILIITGSFGNGHMQVTQSIVNQLNEMNLNHLSVIQHDLFMEAHPIMTSICKKWYINSFKYFRNTYKRFYYSRPNELDKCFYKYYGLNKLINLLIKEKPDLILLTFPTPVMSVLTEQFNINIPIATVMTDYRMHKNWITPYSQRYYVATKDTKDDFIEAGVPASYIKVTGIPIADKFEESIDKEEWLSQQHLDPSKPTILMSAGAFGVSKGFDYMINNILEKSPNSQVVMICGRSKELKRSLKAKFKDNPSVKILGYTNHMNEWMASSQLMITKPGGITISEGLSRCIPMIFLNPAPGQELENAYYFESKGFGKIADTPNEAIDIVSDLTNNEETLKVMSSKMLESKVGYSTRKICKDLLDLIGHSSQPDEIYGKVPLYARFFVK</sequence>
<protein>
    <recommendedName>
        <fullName evidence="1">Processive diacylglycerol beta-glucosyltransferase</fullName>
        <ecNumber>2.4.1.315</ecNumber>
    </recommendedName>
    <alternativeName>
        <fullName evidence="1">Beta-diglucosyldiacylglycerol synthase</fullName>
        <shortName evidence="1">Beta-DGS</shortName>
        <shortName evidence="1">DGlcDAG synthase</shortName>
        <shortName evidence="1">Glc2-DAG synthase</shortName>
    </alternativeName>
    <alternativeName>
        <fullName evidence="1">Beta-gentiobiosyldiacylglycerol synthase</fullName>
    </alternativeName>
    <alternativeName>
        <fullName evidence="1">Beta-monoglucosyldiacylglycerol synthase</fullName>
        <shortName evidence="1">Beta-MGS</shortName>
        <shortName evidence="1">MGlcDAG synthase</shortName>
    </alternativeName>
    <alternativeName>
        <fullName>Diglucosyl diacylglycerol synthase (1,6-linking)</fullName>
    </alternativeName>
    <alternativeName>
        <fullName evidence="1">Glucosyl-beta-1,6-glucosyldiacylglycerol synthase</fullName>
    </alternativeName>
    <alternativeName>
        <fullName evidence="1">UDP glucosyltransferase</fullName>
    </alternativeName>
    <alternativeName>
        <fullName evidence="1">UDP-glucose:1,2-diacylglycerol-3-beta-D-glucosyltransferase</fullName>
    </alternativeName>
</protein>
<reference key="1">
    <citation type="journal article" date="2003" name="Mol. Microbiol.">
        <title>Genome-based analysis of virulence genes in a non-biofilm-forming Staphylococcus epidermidis strain (ATCC 12228).</title>
        <authorList>
            <person name="Zhang Y.-Q."/>
            <person name="Ren S.-X."/>
            <person name="Li H.-L."/>
            <person name="Wang Y.-X."/>
            <person name="Fu G."/>
            <person name="Yang J."/>
            <person name="Qin Z.-Q."/>
            <person name="Miao Y.-G."/>
            <person name="Wang W.-Y."/>
            <person name="Chen R.-S."/>
            <person name="Shen Y."/>
            <person name="Chen Z."/>
            <person name="Yuan Z.-H."/>
            <person name="Zhao G.-P."/>
            <person name="Qu D."/>
            <person name="Danchin A."/>
            <person name="Wen Y.-M."/>
        </authorList>
    </citation>
    <scope>NUCLEOTIDE SEQUENCE [LARGE SCALE GENOMIC DNA]</scope>
    <source>
        <strain>ATCC 12228 / FDA PCI 1200</strain>
    </source>
</reference>
<proteinExistence type="inferred from homology"/>
<dbReference type="EC" id="2.4.1.315"/>
<dbReference type="EMBL" id="AE015929">
    <property type="protein sequence ID" value="AAO04314.1"/>
    <property type="molecule type" value="Genomic_DNA"/>
</dbReference>
<dbReference type="RefSeq" id="NP_764272.1">
    <property type="nucleotide sequence ID" value="NC_004461.1"/>
</dbReference>
<dbReference type="RefSeq" id="WP_002475762.1">
    <property type="nucleotide sequence ID" value="NZ_WBME01000019.1"/>
</dbReference>
<dbReference type="SMR" id="Q8CPR3"/>
<dbReference type="CAZy" id="GT28">
    <property type="family name" value="Glycosyltransferase Family 28"/>
</dbReference>
<dbReference type="KEGG" id="sep:SE_0717"/>
<dbReference type="PATRIC" id="fig|176280.10.peg.691"/>
<dbReference type="eggNOG" id="COG0707">
    <property type="taxonomic scope" value="Bacteria"/>
</dbReference>
<dbReference type="HOGENOM" id="CLU_028367_0_1_9"/>
<dbReference type="OrthoDB" id="9815663at2"/>
<dbReference type="UniPathway" id="UPA00894"/>
<dbReference type="Proteomes" id="UP000001411">
    <property type="component" value="Chromosome"/>
</dbReference>
<dbReference type="GO" id="GO:0005886">
    <property type="term" value="C:plasma membrane"/>
    <property type="evidence" value="ECO:0007669"/>
    <property type="project" value="UniProtKB-SubCell"/>
</dbReference>
<dbReference type="GO" id="GO:0047228">
    <property type="term" value="F:1,2-diacylglycerol 3-glucosyltransferase activity"/>
    <property type="evidence" value="ECO:0007669"/>
    <property type="project" value="UniProtKB-UniRule"/>
</dbReference>
<dbReference type="GO" id="GO:0009246">
    <property type="term" value="P:enterobacterial common antigen biosynthetic process"/>
    <property type="evidence" value="ECO:0007669"/>
    <property type="project" value="UniProtKB-UniPathway"/>
</dbReference>
<dbReference type="GO" id="GO:0009247">
    <property type="term" value="P:glycolipid biosynthetic process"/>
    <property type="evidence" value="ECO:0007669"/>
    <property type="project" value="UniProtKB-UniRule"/>
</dbReference>
<dbReference type="GO" id="GO:0070395">
    <property type="term" value="P:lipoteichoic acid biosynthetic process"/>
    <property type="evidence" value="ECO:0007669"/>
    <property type="project" value="UniProtKB-UniRule"/>
</dbReference>
<dbReference type="CDD" id="cd17507">
    <property type="entry name" value="GT28_Beta-DGS-like"/>
    <property type="match status" value="1"/>
</dbReference>
<dbReference type="Gene3D" id="3.40.50.2000">
    <property type="entry name" value="Glycogen Phosphorylase B"/>
    <property type="match status" value="1"/>
</dbReference>
<dbReference type="HAMAP" id="MF_01280">
    <property type="entry name" value="Diacylglyc_glucosyltr"/>
    <property type="match status" value="1"/>
</dbReference>
<dbReference type="InterPro" id="IPR009695">
    <property type="entry name" value="Diacylglyc_glucosyltr_N"/>
</dbReference>
<dbReference type="InterPro" id="IPR007235">
    <property type="entry name" value="Glyco_trans_28_C"/>
</dbReference>
<dbReference type="InterPro" id="IPR050519">
    <property type="entry name" value="Glycosyltransf_28_UgtP"/>
</dbReference>
<dbReference type="InterPro" id="IPR023589">
    <property type="entry name" value="Pro_diacylglycrl_glcsylTrfase"/>
</dbReference>
<dbReference type="NCBIfam" id="NF010134">
    <property type="entry name" value="PRK13608.1"/>
    <property type="match status" value="1"/>
</dbReference>
<dbReference type="PANTHER" id="PTHR43025">
    <property type="entry name" value="MONOGALACTOSYLDIACYLGLYCEROL SYNTHASE"/>
    <property type="match status" value="1"/>
</dbReference>
<dbReference type="PANTHER" id="PTHR43025:SF3">
    <property type="entry name" value="MONOGALACTOSYLDIACYLGLYCEROL SYNTHASE 1, CHLOROPLASTIC"/>
    <property type="match status" value="1"/>
</dbReference>
<dbReference type="Pfam" id="PF04101">
    <property type="entry name" value="Glyco_tran_28_C"/>
    <property type="match status" value="1"/>
</dbReference>
<dbReference type="Pfam" id="PF06925">
    <property type="entry name" value="MGDG_synth"/>
    <property type="match status" value="1"/>
</dbReference>
<dbReference type="SUPFAM" id="SSF53756">
    <property type="entry name" value="UDP-Glycosyltransferase/glycogen phosphorylase"/>
    <property type="match status" value="1"/>
</dbReference>
<accession>Q8CPR3</accession>
<organism>
    <name type="scientific">Staphylococcus epidermidis (strain ATCC 12228 / FDA PCI 1200)</name>
    <dbReference type="NCBI Taxonomy" id="176280"/>
    <lineage>
        <taxon>Bacteria</taxon>
        <taxon>Bacillati</taxon>
        <taxon>Bacillota</taxon>
        <taxon>Bacilli</taxon>
        <taxon>Bacillales</taxon>
        <taxon>Staphylococcaceae</taxon>
        <taxon>Staphylococcus</taxon>
    </lineage>
</organism>
<feature type="chain" id="PRO_0000308461" description="Processive diacylglycerol beta-glucosyltransferase">
    <location>
        <begin position="1"/>
        <end position="391"/>
    </location>
</feature>
<evidence type="ECO:0000255" key="1">
    <source>
        <dbReference type="HAMAP-Rule" id="MF_01280"/>
    </source>
</evidence>
<comment type="function">
    <text evidence="1">Processive glucosyltransferase involved in the biosynthesis of both the bilayer- and non-bilayer-forming membrane glucolipids. Is able to successively transfer two glucosyl residues to diacylglycerol (DAG), thereby catalyzing the formation of beta-monoglucosyl-DAG (3-O-(beta-D-glucopyranosyl)-1,2-diacyl-sn-glycerol) and beta-diglucosyl-DAG (3-O-(beta-D-glucopyranosyl-beta-(1-&gt;6)-D-glucopyranosyl)-1,2-diacyl-sn-glycerol). Beta-diglucosyl-DAG is the predominant glycolipid found in Bacillales and is also used as a membrane anchor for lipoteichoic acid (LTA).</text>
</comment>
<comment type="catalytic activity">
    <reaction>
        <text>a 1,2-diacyl-3-O-(beta-D-glucopyranosyl)-sn-glycerol + UDP-alpha-D-glucose = a 1,2-diacyl-3-O-(beta-D-Glc-(1-&gt;6)-beta-D-Glc)-sn-glycerol + UDP + H(+)</text>
        <dbReference type="Rhea" id="RHEA:39031"/>
        <dbReference type="ChEBI" id="CHEBI:15378"/>
        <dbReference type="ChEBI" id="CHEBI:58223"/>
        <dbReference type="ChEBI" id="CHEBI:58885"/>
        <dbReference type="ChEBI" id="CHEBI:75799"/>
        <dbReference type="ChEBI" id="CHEBI:76264"/>
        <dbReference type="EC" id="2.4.1.315"/>
    </reaction>
</comment>
<comment type="catalytic activity">
    <reaction evidence="1">
        <text>a 1,2-diacyl-sn-glycerol + UDP-alpha-D-glucose = a 1,2-diacyl-3-O-(beta-D-glucopyranosyl)-sn-glycerol + UDP + H(+)</text>
        <dbReference type="Rhea" id="RHEA:17285"/>
        <dbReference type="ChEBI" id="CHEBI:15378"/>
        <dbReference type="ChEBI" id="CHEBI:17815"/>
        <dbReference type="ChEBI" id="CHEBI:58223"/>
        <dbReference type="ChEBI" id="CHEBI:58885"/>
        <dbReference type="ChEBI" id="CHEBI:75799"/>
    </reaction>
</comment>
<comment type="pathway">
    <text evidence="1">Glycolipid metabolism; diglucosyl-diacylglycerol biosynthesis.</text>
</comment>
<comment type="subcellular location">
    <subcellularLocation>
        <location evidence="1">Cell membrane</location>
    </subcellularLocation>
</comment>
<comment type="similarity">
    <text evidence="1">Belongs to the glycosyltransferase 28 family. UgtP subfamily.</text>
</comment>
<gene>
    <name evidence="1" type="primary">ugtP</name>
    <name type="ordered locus">SE_0717</name>
</gene>
<keyword id="KW-0119">Carbohydrate metabolism</keyword>
<keyword id="KW-1003">Cell membrane</keyword>
<keyword id="KW-0328">Glycosyltransferase</keyword>
<keyword id="KW-0444">Lipid biosynthesis</keyword>
<keyword id="KW-0443">Lipid metabolism</keyword>
<keyword id="KW-0472">Membrane</keyword>
<keyword id="KW-0808">Transferase</keyword>
<name>UGTP_STAES</name>